<evidence type="ECO:0000255" key="1">
    <source>
        <dbReference type="HAMAP-Rule" id="MF_01343"/>
    </source>
</evidence>
<evidence type="ECO:0000305" key="2"/>
<gene>
    <name evidence="1" type="primary">rpsO</name>
    <name type="ordered locus">VV2705</name>
</gene>
<protein>
    <recommendedName>
        <fullName evidence="1">Small ribosomal subunit protein uS15</fullName>
    </recommendedName>
    <alternativeName>
        <fullName evidence="2">30S ribosomal protein S15</fullName>
    </alternativeName>
</protein>
<proteinExistence type="inferred from homology"/>
<sequence>MSLNAETKAAIVADYARGEGDTGSPEVQVALLTASINHLQGHFQAHKGDHHSRRGLLRMVSRRRKLLDYLKGKDLARYQDLIKRLGLRR</sequence>
<comment type="function">
    <text evidence="1">One of the primary rRNA binding proteins, it binds directly to 16S rRNA where it helps nucleate assembly of the platform of the 30S subunit by binding and bridging several RNA helices of the 16S rRNA.</text>
</comment>
<comment type="function">
    <text evidence="1">Forms an intersubunit bridge (bridge B4) with the 23S rRNA of the 50S subunit in the ribosome.</text>
</comment>
<comment type="subunit">
    <text evidence="1">Part of the 30S ribosomal subunit. Forms a bridge to the 50S subunit in the 70S ribosome, contacting the 23S rRNA.</text>
</comment>
<comment type="similarity">
    <text evidence="1">Belongs to the universal ribosomal protein uS15 family.</text>
</comment>
<organism>
    <name type="scientific">Vibrio vulnificus (strain YJ016)</name>
    <dbReference type="NCBI Taxonomy" id="196600"/>
    <lineage>
        <taxon>Bacteria</taxon>
        <taxon>Pseudomonadati</taxon>
        <taxon>Pseudomonadota</taxon>
        <taxon>Gammaproteobacteria</taxon>
        <taxon>Vibrionales</taxon>
        <taxon>Vibrionaceae</taxon>
        <taxon>Vibrio</taxon>
    </lineage>
</organism>
<keyword id="KW-0687">Ribonucleoprotein</keyword>
<keyword id="KW-0689">Ribosomal protein</keyword>
<keyword id="KW-0694">RNA-binding</keyword>
<keyword id="KW-0699">rRNA-binding</keyword>
<accession>Q7MI12</accession>
<reference key="1">
    <citation type="journal article" date="2003" name="Genome Res.">
        <title>Comparative genome analysis of Vibrio vulnificus, a marine pathogen.</title>
        <authorList>
            <person name="Chen C.-Y."/>
            <person name="Wu K.-M."/>
            <person name="Chang Y.-C."/>
            <person name="Chang C.-H."/>
            <person name="Tsai H.-C."/>
            <person name="Liao T.-L."/>
            <person name="Liu Y.-M."/>
            <person name="Chen H.-J."/>
            <person name="Shen A.B.-T."/>
            <person name="Li J.-C."/>
            <person name="Su T.-L."/>
            <person name="Shao C.-P."/>
            <person name="Lee C.-T."/>
            <person name="Hor L.-I."/>
            <person name="Tsai S.-F."/>
        </authorList>
    </citation>
    <scope>NUCLEOTIDE SEQUENCE [LARGE SCALE GENOMIC DNA]</scope>
    <source>
        <strain>YJ016</strain>
    </source>
</reference>
<feature type="chain" id="PRO_0000115585" description="Small ribosomal subunit protein uS15">
    <location>
        <begin position="1"/>
        <end position="89"/>
    </location>
</feature>
<dbReference type="EMBL" id="BA000037">
    <property type="protein sequence ID" value="BAC95469.1"/>
    <property type="molecule type" value="Genomic_DNA"/>
</dbReference>
<dbReference type="RefSeq" id="WP_011079620.1">
    <property type="nucleotide sequence ID" value="NC_005139.1"/>
</dbReference>
<dbReference type="SMR" id="Q7MI12"/>
<dbReference type="STRING" id="672.VV93_v1c24220"/>
<dbReference type="GeneID" id="95677972"/>
<dbReference type="KEGG" id="vvy:VV2705"/>
<dbReference type="eggNOG" id="COG0184">
    <property type="taxonomic scope" value="Bacteria"/>
</dbReference>
<dbReference type="HOGENOM" id="CLU_148518_0_0_6"/>
<dbReference type="Proteomes" id="UP000002675">
    <property type="component" value="Chromosome I"/>
</dbReference>
<dbReference type="GO" id="GO:0022627">
    <property type="term" value="C:cytosolic small ribosomal subunit"/>
    <property type="evidence" value="ECO:0007669"/>
    <property type="project" value="TreeGrafter"/>
</dbReference>
<dbReference type="GO" id="GO:0019843">
    <property type="term" value="F:rRNA binding"/>
    <property type="evidence" value="ECO:0007669"/>
    <property type="project" value="UniProtKB-UniRule"/>
</dbReference>
<dbReference type="GO" id="GO:0003735">
    <property type="term" value="F:structural constituent of ribosome"/>
    <property type="evidence" value="ECO:0007669"/>
    <property type="project" value="InterPro"/>
</dbReference>
<dbReference type="GO" id="GO:0006412">
    <property type="term" value="P:translation"/>
    <property type="evidence" value="ECO:0007669"/>
    <property type="project" value="UniProtKB-UniRule"/>
</dbReference>
<dbReference type="CDD" id="cd00353">
    <property type="entry name" value="Ribosomal_S15p_S13e"/>
    <property type="match status" value="1"/>
</dbReference>
<dbReference type="FunFam" id="1.10.287.10:FF:000002">
    <property type="entry name" value="30S ribosomal protein S15"/>
    <property type="match status" value="1"/>
</dbReference>
<dbReference type="Gene3D" id="6.10.250.3130">
    <property type="match status" value="1"/>
</dbReference>
<dbReference type="Gene3D" id="1.10.287.10">
    <property type="entry name" value="S15/NS1, RNA-binding"/>
    <property type="match status" value="1"/>
</dbReference>
<dbReference type="HAMAP" id="MF_01343_B">
    <property type="entry name" value="Ribosomal_uS15_B"/>
    <property type="match status" value="1"/>
</dbReference>
<dbReference type="InterPro" id="IPR000589">
    <property type="entry name" value="Ribosomal_uS15"/>
</dbReference>
<dbReference type="InterPro" id="IPR005290">
    <property type="entry name" value="Ribosomal_uS15_bac-type"/>
</dbReference>
<dbReference type="InterPro" id="IPR009068">
    <property type="entry name" value="uS15_NS1_RNA-bd_sf"/>
</dbReference>
<dbReference type="NCBIfam" id="TIGR00952">
    <property type="entry name" value="S15_bact"/>
    <property type="match status" value="1"/>
</dbReference>
<dbReference type="PANTHER" id="PTHR23321">
    <property type="entry name" value="RIBOSOMAL PROTEIN S15, BACTERIAL AND ORGANELLAR"/>
    <property type="match status" value="1"/>
</dbReference>
<dbReference type="PANTHER" id="PTHR23321:SF26">
    <property type="entry name" value="SMALL RIBOSOMAL SUBUNIT PROTEIN US15M"/>
    <property type="match status" value="1"/>
</dbReference>
<dbReference type="Pfam" id="PF00312">
    <property type="entry name" value="Ribosomal_S15"/>
    <property type="match status" value="1"/>
</dbReference>
<dbReference type="SMART" id="SM01387">
    <property type="entry name" value="Ribosomal_S15"/>
    <property type="match status" value="1"/>
</dbReference>
<dbReference type="SUPFAM" id="SSF47060">
    <property type="entry name" value="S15/NS1 RNA-binding domain"/>
    <property type="match status" value="1"/>
</dbReference>
<dbReference type="PROSITE" id="PS00362">
    <property type="entry name" value="RIBOSOMAL_S15"/>
    <property type="match status" value="1"/>
</dbReference>
<name>RS15_VIBVY</name>